<keyword id="KW-0066">ATP synthesis</keyword>
<keyword id="KW-0067">ATP-binding</keyword>
<keyword id="KW-0138">CF(0)</keyword>
<keyword id="KW-0375">Hydrogen ion transport</keyword>
<keyword id="KW-0406">Ion transport</keyword>
<keyword id="KW-0472">Membrane</keyword>
<keyword id="KW-0496">Mitochondrion</keyword>
<keyword id="KW-0547">Nucleotide-binding</keyword>
<keyword id="KW-1185">Reference proteome</keyword>
<keyword id="KW-0691">RNA editing</keyword>
<keyword id="KW-1278">Translocase</keyword>
<keyword id="KW-0812">Transmembrane</keyword>
<keyword id="KW-1133">Transmembrane helix</keyword>
<keyword id="KW-0813">Transport</keyword>
<name>YMF19_WHEAT</name>
<feature type="chain" id="PRO_0000196847" description="Putative ATP synthase protein YMF19">
    <location>
        <begin position="1"/>
        <end position="156"/>
    </location>
</feature>
<feature type="transmembrane region" description="Helical" evidence="2">
    <location>
        <begin position="8"/>
        <end position="28"/>
    </location>
</feature>
<dbReference type="EC" id="7.1.2.2"/>
<dbReference type="EMBL" id="X59153">
    <property type="protein sequence ID" value="CAA41867.1"/>
    <property type="status" value="ALT_SEQ"/>
    <property type="molecule type" value="Genomic_DNA"/>
</dbReference>
<dbReference type="PIR" id="JQ1377">
    <property type="entry name" value="JQ1377"/>
</dbReference>
<dbReference type="RefSeq" id="YP_398423.1">
    <property type="nucleotide sequence ID" value="NC_007579.1"/>
</dbReference>
<dbReference type="SMR" id="P43650"/>
<dbReference type="PaxDb" id="4565-EPlTAEP00000010101"/>
<dbReference type="eggNOG" id="ENOG502RXRI">
    <property type="taxonomic scope" value="Eukaryota"/>
</dbReference>
<dbReference type="Proteomes" id="UP000019116">
    <property type="component" value="Unplaced"/>
</dbReference>
<dbReference type="GO" id="GO:0031966">
    <property type="term" value="C:mitochondrial membrane"/>
    <property type="evidence" value="ECO:0007669"/>
    <property type="project" value="UniProtKB-SubCell"/>
</dbReference>
<dbReference type="GO" id="GO:0045259">
    <property type="term" value="C:proton-transporting ATP synthase complex"/>
    <property type="evidence" value="ECO:0007669"/>
    <property type="project" value="UniProtKB-KW"/>
</dbReference>
<dbReference type="GO" id="GO:0005524">
    <property type="term" value="F:ATP binding"/>
    <property type="evidence" value="ECO:0007669"/>
    <property type="project" value="UniProtKB-KW"/>
</dbReference>
<dbReference type="GO" id="GO:0006754">
    <property type="term" value="P:ATP biosynthetic process"/>
    <property type="evidence" value="ECO:0007669"/>
    <property type="project" value="UniProtKB-KW"/>
</dbReference>
<dbReference type="GO" id="GO:1902600">
    <property type="term" value="P:proton transmembrane transport"/>
    <property type="evidence" value="ECO:0007669"/>
    <property type="project" value="UniProtKB-KW"/>
</dbReference>
<dbReference type="InterPro" id="IPR009455">
    <property type="entry name" value="YMF19"/>
</dbReference>
<dbReference type="InterPro" id="IPR044975">
    <property type="entry name" value="YMF19-like"/>
</dbReference>
<dbReference type="InterPro" id="IPR003319">
    <property type="entry name" value="YMF19-like_N"/>
</dbReference>
<dbReference type="PANTHER" id="PTHR36816">
    <property type="entry name" value="ATP SYNTHASE PROTEIN YMF19"/>
    <property type="match status" value="1"/>
</dbReference>
<dbReference type="PANTHER" id="PTHR36816:SF1">
    <property type="entry name" value="ATP SYNTHASE PROTEIN YMF19"/>
    <property type="match status" value="1"/>
</dbReference>
<dbReference type="Pfam" id="PF02326">
    <property type="entry name" value="YMF19"/>
    <property type="match status" value="1"/>
</dbReference>
<dbReference type="Pfam" id="PF06449">
    <property type="entry name" value="YMF19_C"/>
    <property type="match status" value="1"/>
</dbReference>
<protein>
    <recommendedName>
        <fullName>Putative ATP synthase protein YMF19</fullName>
        <ecNumber>7.1.2.2</ecNumber>
    </recommendedName>
    <alternativeName>
        <fullName>18 kDa membrane-bound protein</fullName>
    </alternativeName>
    <alternativeName>
        <fullName>Mitochondrial protein YMF19</fullName>
    </alternativeName>
    <alternativeName>
        <fullName>ORF156</fullName>
    </alternativeName>
</protein>
<organism>
    <name type="scientific">Triticum aestivum</name>
    <name type="common">Wheat</name>
    <dbReference type="NCBI Taxonomy" id="4565"/>
    <lineage>
        <taxon>Eukaryota</taxon>
        <taxon>Viridiplantae</taxon>
        <taxon>Streptophyta</taxon>
        <taxon>Embryophyta</taxon>
        <taxon>Tracheophyta</taxon>
        <taxon>Spermatophyta</taxon>
        <taxon>Magnoliopsida</taxon>
        <taxon>Liliopsida</taxon>
        <taxon>Poales</taxon>
        <taxon>Poaceae</taxon>
        <taxon>BOP clade</taxon>
        <taxon>Pooideae</taxon>
        <taxon>Triticodae</taxon>
        <taxon>Triticeae</taxon>
        <taxon>Triticinae</taxon>
        <taxon>Triticum</taxon>
    </lineage>
</organism>
<proteinExistence type="evidence at transcript level"/>
<reference key="1">
    <citation type="journal article" date="1991" name="Plant Cell">
        <title>Expression of the wheat mitochondrial nad3-rps12 transcription unit: correlation between editing and mRNA maturation.</title>
        <authorList>
            <person name="Gualberto J.M."/>
            <person name="Bonnard G."/>
            <person name="Lamattina L."/>
            <person name="Grienenberger J.-M."/>
        </authorList>
    </citation>
    <scope>NUCLEOTIDE SEQUENCE [GENOMIC DNA]</scope>
    <scope>RNA EDITING</scope>
    <source>
        <strain>cv. Capitole</strain>
        <tissue>Etiolated seedling</tissue>
    </source>
</reference>
<accession>P43650</accession>
<sequence>MPQLDKLTYFSQFFWLCLLFFTFYILLFNNNNGILGISRILKLRNQLLSHRGGEIRSKDPKNLEDILRKGFSTGLSYMYSSLSEVSQWCKTVDYLGKRRKITLISDFGEISGSRGMERQILYLISKSSYNTSSSRITCWKNIMLTHVLHGQGSIIS</sequence>
<geneLocation type="mitochondrion"/>
<gene>
    <name type="primary">YMF19</name>
</gene>
<evidence type="ECO:0000250" key="1"/>
<evidence type="ECO:0000255" key="2"/>
<evidence type="ECO:0000269" key="3">
    <source>
    </source>
</evidence>
<evidence type="ECO:0000305" key="4"/>
<comment type="function">
    <text evidence="1">This is one of the chains of the nonenzymatic component (CF(0) subunit) of the mitochondrial ATPase complex.</text>
</comment>
<comment type="catalytic activity">
    <reaction>
        <text>ATP + H2O + 4 H(+)(in) = ADP + phosphate + 5 H(+)(out)</text>
        <dbReference type="Rhea" id="RHEA:57720"/>
        <dbReference type="ChEBI" id="CHEBI:15377"/>
        <dbReference type="ChEBI" id="CHEBI:15378"/>
        <dbReference type="ChEBI" id="CHEBI:30616"/>
        <dbReference type="ChEBI" id="CHEBI:43474"/>
        <dbReference type="ChEBI" id="CHEBI:456216"/>
        <dbReference type="EC" id="7.1.2.2"/>
    </reaction>
</comment>
<comment type="subunit">
    <text evidence="1">F-type ATPases have 2 components, CF(1) - the catalytic core - and CF(0) - the membrane proton channel. CF(1) has five subunits: alpha(3), beta(3), gamma(1), delta(1), epsilon(1). CF(0) has three main subunits: a, b and c (By similarity).</text>
</comment>
<comment type="subcellular location">
    <subcellularLocation>
        <location evidence="1">Mitochondrion membrane</location>
        <topology evidence="1">Single-pass membrane protein</topology>
    </subcellularLocation>
</comment>
<comment type="RNA editing">
    <location>
        <position position="20" evidence="3"/>
    </location>
    <location>
        <position position="67" evidence="3"/>
    </location>
    <location>
        <position position="148" evidence="3"/>
    </location>
</comment>
<comment type="similarity">
    <text evidence="4">Belongs to the ATPase protein YMF19 family.</text>
</comment>